<keyword id="KW-0131">Cell cycle</keyword>
<keyword id="KW-0175">Coiled coil</keyword>
<keyword id="KW-0963">Cytoplasm</keyword>
<keyword id="KW-0903">Direct protein sequencing</keyword>
<keyword id="KW-0225">Disease variant</keyword>
<keyword id="KW-0256">Endoplasmic reticulum</keyword>
<keyword id="KW-0931">ER-Golgi transport</keyword>
<keyword id="KW-0472">Membrane</keyword>
<keyword id="KW-0653">Protein transport</keyword>
<keyword id="KW-1267">Proteomics identification</keyword>
<keyword id="KW-1185">Reference proteome</keyword>
<keyword id="KW-0813">Transport</keyword>
<comment type="function">
    <text evidence="4 7 12">Involved in regulation of membrane traffic between the Golgi and the endoplasmic reticulum (ER); the function is proposed to depend on its association in the NRZ complex which is believed to play a role in SNARE assembly at the ER. May play a role in cell cycle checkpoint control (PubMed:11096100). Essential for telomere length control (PubMed:16600870).</text>
</comment>
<comment type="subunit">
    <text evidence="4 5 6 7 8 9 10">Component of the NRZ complex composed of NBAS, ZW10 and RINT1/TIP20L; NRZ associates with SNAREs STX18, USE1L, BNIP1/SEC20L and SEC22B (the assembly has been described as syntaxin 18 complex) (PubMed:15029241, PubMed:19369418, PubMed:20462495). Interacts directly with BNIP1/SEC20L and ZW10 (PubMed:15029241, PubMed:15272311). Interacts with UVRAG (PubMed:24056303). Interacts with RAD50 during late S and G2/M phases (PubMed:11096100). Interacts with RBL2, preferentially with the active, hypophosphorylated form (PubMed:16600870).</text>
</comment>
<comment type="interaction">
    <interactant intactId="EBI-726876">
        <id>Q6NUQ1</id>
    </interactant>
    <interactant intactId="EBI-8643161">
        <id>Q9NX04</id>
        <label>AIRIM</label>
    </interactant>
    <organismsDiffer>false</organismsDiffer>
    <experiments>6</experiments>
</comment>
<comment type="interaction">
    <interactant intactId="EBI-726876">
        <id>Q6NUQ1</id>
    </interactant>
    <interactant intactId="EBI-17183751">
        <id>X5D778</id>
        <label>ANKRD11</label>
    </interactant>
    <organismsDiffer>false</organismsDiffer>
    <experiments>3</experiments>
</comment>
<comment type="interaction">
    <interactant intactId="EBI-726876">
        <id>Q6NUQ1</id>
    </interactant>
    <interactant intactId="EBI-2825900">
        <id>Q92619</id>
        <label>ARHGAP45</label>
    </interactant>
    <organismsDiffer>false</organismsDiffer>
    <experiments>5</experiments>
</comment>
<comment type="interaction">
    <interactant intactId="EBI-726876">
        <id>Q6NUQ1</id>
    </interactant>
    <interactant intactId="EBI-10229433">
        <id>Q13515</id>
        <label>BFSP2</label>
    </interactant>
    <organismsDiffer>false</organismsDiffer>
    <experiments>3</experiments>
</comment>
<comment type="interaction">
    <interactant intactId="EBI-726876">
        <id>Q6NUQ1</id>
    </interactant>
    <interactant intactId="EBI-465781">
        <id>Q9UL45</id>
        <label>BLOC1S6</label>
    </interactant>
    <organismsDiffer>false</organismsDiffer>
    <experiments>3</experiments>
</comment>
<comment type="interaction">
    <interactant intactId="EBI-726876">
        <id>Q6NUQ1</id>
    </interactant>
    <interactant intactId="EBI-741214">
        <id>Q9UFG5</id>
        <label>C19orf25</label>
    </interactant>
    <organismsDiffer>false</organismsDiffer>
    <experiments>6</experiments>
</comment>
<comment type="interaction">
    <interactant intactId="EBI-726876">
        <id>Q6NUQ1</id>
    </interactant>
    <interactant intactId="EBI-12061599">
        <id>Q9H6X5-2</id>
        <label>C19orf44</label>
    </interactant>
    <organismsDiffer>false</organismsDiffer>
    <experiments>3</experiments>
</comment>
<comment type="interaction">
    <interactant intactId="EBI-726876">
        <id>Q6NUQ1</id>
    </interactant>
    <interactant intactId="EBI-744556">
        <id>Q96HB5</id>
        <label>CCDC120</label>
    </interactant>
    <organismsDiffer>false</organismsDiffer>
    <experiments>3</experiments>
</comment>
<comment type="interaction">
    <interactant intactId="EBI-726876">
        <id>Q6NUQ1</id>
    </interactant>
    <interactant intactId="EBI-2836982">
        <id>Q6ZUS5</id>
        <label>CCDC121</label>
    </interactant>
    <organismsDiffer>false</organismsDiffer>
    <experiments>4</experiments>
</comment>
<comment type="interaction">
    <interactant intactId="EBI-726876">
        <id>Q6NUQ1</id>
    </interactant>
    <interactant intactId="EBI-10247802">
        <id>Q8IYE0-2</id>
        <label>CCDC146</label>
    </interactant>
    <organismsDiffer>false</organismsDiffer>
    <experiments>3</experiments>
</comment>
<comment type="interaction">
    <interactant intactId="EBI-726876">
        <id>Q6NUQ1</id>
    </interactant>
    <interactant intactId="EBI-10961624">
        <id>Q2TAC2-2</id>
        <label>CCDC57</label>
    </interactant>
    <organismsDiffer>false</organismsDiffer>
    <experiments>3</experiments>
</comment>
<comment type="interaction">
    <interactant intactId="EBI-726876">
        <id>Q6NUQ1</id>
    </interactant>
    <interactant intactId="EBI-347573">
        <id>A6NC98</id>
        <label>CCDC88B</label>
    </interactant>
    <organismsDiffer>false</organismsDiffer>
    <experiments>3</experiments>
</comment>
<comment type="interaction">
    <interactant intactId="EBI-726876">
        <id>Q6NUQ1</id>
    </interactant>
    <interactant intactId="EBI-10175300">
        <id>Q8TD31-3</id>
        <label>CCHCR1</label>
    </interactant>
    <organismsDiffer>false</organismsDiffer>
    <experiments>5</experiments>
</comment>
<comment type="interaction">
    <interactant intactId="EBI-726876">
        <id>Q6NUQ1</id>
    </interactant>
    <interactant intactId="EBI-11063830">
        <id>Q86X02</id>
        <label>CDR2L</label>
    </interactant>
    <organismsDiffer>false</organismsDiffer>
    <experiments>3</experiments>
</comment>
<comment type="interaction">
    <interactant intactId="EBI-726876">
        <id>Q6NUQ1</id>
    </interactant>
    <interactant intactId="EBI-10181988">
        <id>Q8IYX8-2</id>
        <label>CEP57L1</label>
    </interactant>
    <organismsDiffer>false</organismsDiffer>
    <experiments>3</experiments>
</comment>
<comment type="interaction">
    <interactant intactId="EBI-726876">
        <id>Q6NUQ1</id>
    </interactant>
    <interactant intactId="EBI-10239122">
        <id>Q1MSJ5-1</id>
        <label>CSPP1</label>
    </interactant>
    <organismsDiffer>false</organismsDiffer>
    <experiments>3</experiments>
</comment>
<comment type="interaction">
    <interactant intactId="EBI-726876">
        <id>Q6NUQ1</id>
    </interactant>
    <interactant intactId="EBI-5453285">
        <id>Q2TBE0</id>
        <label>CWF19L2</label>
    </interactant>
    <organismsDiffer>false</organismsDiffer>
    <experiments>6</experiments>
</comment>
<comment type="interaction">
    <interactant intactId="EBI-726876">
        <id>Q6NUQ1</id>
    </interactant>
    <interactant intactId="EBI-715074">
        <id>Q13561</id>
        <label>DCTN2</label>
    </interactant>
    <organismsDiffer>false</organismsDiffer>
    <experiments>3</experiments>
</comment>
<comment type="interaction">
    <interactant intactId="EBI-726876">
        <id>Q6NUQ1</id>
    </interactant>
    <interactant intactId="EBI-8646694">
        <id>O43602</id>
        <label>DCX</label>
    </interactant>
    <organismsDiffer>false</organismsDiffer>
    <experiments>4</experiments>
</comment>
<comment type="interaction">
    <interactant intactId="EBI-726876">
        <id>Q6NUQ1</id>
    </interactant>
    <interactant intactId="EBI-359932">
        <id>Q92785</id>
        <label>DPF2</label>
    </interactant>
    <organismsDiffer>false</organismsDiffer>
    <experiments>3</experiments>
</comment>
<comment type="interaction">
    <interactant intactId="EBI-726876">
        <id>Q6NUQ1</id>
    </interactant>
    <interactant intactId="EBI-769270">
        <id>Q9H2F5</id>
        <label>EPC1</label>
    </interactant>
    <organismsDiffer>false</organismsDiffer>
    <experiments>5</experiments>
</comment>
<comment type="interaction">
    <interactant intactId="EBI-726876">
        <id>Q6NUQ1</id>
    </interactant>
    <interactant intactId="EBI-12001340">
        <id>P62508-3</id>
        <label>ESRRG</label>
    </interactant>
    <organismsDiffer>false</organismsDiffer>
    <experiments>3</experiments>
</comment>
<comment type="interaction">
    <interactant intactId="EBI-726876">
        <id>Q6NUQ1</id>
    </interactant>
    <interactant intactId="EBI-742102">
        <id>Q8IYI6</id>
        <label>EXOC8</label>
    </interactant>
    <organismsDiffer>false</organismsDiffer>
    <experiments>5</experiments>
</comment>
<comment type="interaction">
    <interactant intactId="EBI-726876">
        <id>Q6NUQ1</id>
    </interactant>
    <interactant intactId="EBI-10192902">
        <id>O95990-3</id>
        <label>FAM107A</label>
    </interactant>
    <organismsDiffer>false</organismsDiffer>
    <experiments>3</experiments>
</comment>
<comment type="interaction">
    <interactant intactId="EBI-726876">
        <id>Q6NUQ1</id>
    </interactant>
    <interactant intactId="EBI-1752811">
        <id>Q9BQ89</id>
        <label>FAM110A</label>
    </interactant>
    <organismsDiffer>false</organismsDiffer>
    <experiments>6</experiments>
</comment>
<comment type="interaction">
    <interactant intactId="EBI-726876">
        <id>Q6NUQ1</id>
    </interactant>
    <interactant intactId="EBI-741626">
        <id>Q9H5Z6</id>
        <label>FAM124B</label>
    </interactant>
    <organismsDiffer>false</organismsDiffer>
    <experiments>3</experiments>
</comment>
<comment type="interaction">
    <interactant intactId="EBI-726876">
        <id>Q6NUQ1</id>
    </interactant>
    <interactant intactId="EBI-719941">
        <id>Q3B820</id>
        <label>FAM161A</label>
    </interactant>
    <organismsDiffer>false</organismsDiffer>
    <experiments>3</experiments>
</comment>
<comment type="interaction">
    <interactant intactId="EBI-726876">
        <id>Q6NUQ1</id>
    </interactant>
    <interactant intactId="EBI-7225287">
        <id>Q96MY7</id>
        <label>FAM161B</label>
    </interactant>
    <organismsDiffer>false</organismsDiffer>
    <experiments>3</experiments>
</comment>
<comment type="interaction">
    <interactant intactId="EBI-726876">
        <id>Q6NUQ1</id>
    </interactant>
    <interactant intactId="EBI-10290827">
        <id>Q96LP2</id>
        <label>FAM81B</label>
    </interactant>
    <organismsDiffer>false</organismsDiffer>
    <experiments>5</experiments>
</comment>
<comment type="interaction">
    <interactant intactId="EBI-726876">
        <id>Q6NUQ1</id>
    </interactant>
    <interactant intactId="EBI-6658203">
        <id>Q86YD7</id>
        <label>FAM90A1</label>
    </interactant>
    <organismsDiffer>false</organismsDiffer>
    <experiments>3</experiments>
</comment>
<comment type="interaction">
    <interactant intactId="EBI-726876">
        <id>Q6NUQ1</id>
    </interactant>
    <interactant intactId="EBI-11958845">
        <id>O94868-3</id>
        <label>FCHSD2</label>
    </interactant>
    <organismsDiffer>false</organismsDiffer>
    <experiments>3</experiments>
</comment>
<comment type="interaction">
    <interactant intactId="EBI-726876">
        <id>Q6NUQ1</id>
    </interactant>
    <interactant intactId="EBI-1052570">
        <id>O95995</id>
        <label>GAS8</label>
    </interactant>
    <organismsDiffer>false</organismsDiffer>
    <experiments>3</experiments>
</comment>
<comment type="interaction">
    <interactant intactId="EBI-726876">
        <id>Q6NUQ1</id>
    </interactant>
    <interactant intactId="EBI-308629">
        <id>P56524</id>
        <label>HDAC4</label>
    </interactant>
    <organismsDiffer>false</organismsDiffer>
    <experiments>3</experiments>
</comment>
<comment type="interaction">
    <interactant intactId="EBI-726876">
        <id>Q6NUQ1</id>
    </interactant>
    <interactant intactId="EBI-16429135">
        <id>A0A0S2Z4Q4</id>
        <label>HGS</label>
    </interactant>
    <organismsDiffer>false</organismsDiffer>
    <experiments>3</experiments>
</comment>
<comment type="interaction">
    <interactant intactId="EBI-726876">
        <id>Q6NUQ1</id>
    </interactant>
    <interactant intactId="EBI-466029">
        <id>P42858</id>
        <label>HTT</label>
    </interactant>
    <organismsDiffer>false</organismsDiffer>
    <experiments>3</experiments>
</comment>
<comment type="interaction">
    <interactant intactId="EBI-726876">
        <id>Q6NUQ1</id>
    </interactant>
    <interactant intactId="EBI-10236940">
        <id>Q15735</id>
        <label>INPP5J</label>
    </interactant>
    <organismsDiffer>false</organismsDiffer>
    <experiments>3</experiments>
</comment>
<comment type="interaction">
    <interactant intactId="EBI-726876">
        <id>Q6NUQ1</id>
    </interactant>
    <interactant intactId="EBI-10268138">
        <id>Q8N9B5-2</id>
        <label>JMY</label>
    </interactant>
    <organismsDiffer>false</organismsDiffer>
    <experiments>3</experiments>
</comment>
<comment type="interaction">
    <interactant intactId="EBI-726876">
        <id>Q6NUQ1</id>
    </interactant>
    <interactant intactId="EBI-10188326">
        <id>Q5T5P2-6</id>
        <label>KIAA1217</label>
    </interactant>
    <organismsDiffer>false</organismsDiffer>
    <experiments>3</experiments>
</comment>
<comment type="interaction">
    <interactant intactId="EBI-726876">
        <id>Q6NUQ1</id>
    </interactant>
    <interactant intactId="EBI-298429">
        <id>P04264</id>
        <label>KRT1</label>
    </interactant>
    <organismsDiffer>false</organismsDiffer>
    <experiments>3</experiments>
</comment>
<comment type="interaction">
    <interactant intactId="EBI-726876">
        <id>Q6NUQ1</id>
    </interactant>
    <interactant intactId="EBI-739696">
        <id>P25791</id>
        <label>LMO2</label>
    </interactant>
    <organismsDiffer>false</organismsDiffer>
    <experiments>4</experiments>
</comment>
<comment type="interaction">
    <interactant intactId="EBI-726876">
        <id>Q6NUQ1</id>
    </interactant>
    <interactant intactId="EBI-10226726">
        <id>Q0VAF8</id>
        <label>LOC729862</label>
    </interactant>
    <organismsDiffer>false</organismsDiffer>
    <experiments>3</experiments>
</comment>
<comment type="interaction">
    <interactant intactId="EBI-726876">
        <id>Q6NUQ1</id>
    </interactant>
    <interactant intactId="EBI-10226748">
        <id>Q0VAF9</id>
        <label>LOC729862</label>
    </interactant>
    <organismsDiffer>false</organismsDiffer>
    <experiments>3</experiments>
</comment>
<comment type="interaction">
    <interactant intactId="EBI-726876">
        <id>Q6NUQ1</id>
    </interactant>
    <interactant intactId="EBI-10293291">
        <id>Q96S90</id>
        <label>LYSMD1</label>
    </interactant>
    <organismsDiffer>false</organismsDiffer>
    <experiments>3</experiments>
</comment>
<comment type="interaction">
    <interactant intactId="EBI-726876">
        <id>Q6NUQ1</id>
    </interactant>
    <interactant intactId="EBI-11978579">
        <id>O95983-2</id>
        <label>MBD3</label>
    </interactant>
    <organismsDiffer>false</organismsDiffer>
    <experiments>3</experiments>
</comment>
<comment type="interaction">
    <interactant intactId="EBI-726876">
        <id>Q6NUQ1</id>
    </interactant>
    <interactant intactId="EBI-14086479">
        <id>Q8IVT4</id>
        <label>MGC50722</label>
    </interactant>
    <organismsDiffer>false</organismsDiffer>
    <experiments>3</experiments>
</comment>
<comment type="interaction">
    <interactant intactId="EBI-726876">
        <id>Q6NUQ1</id>
    </interactant>
    <interactant intactId="EBI-2555085">
        <id>Q8IVT2</id>
        <label>MISP</label>
    </interactant>
    <organismsDiffer>false</organismsDiffer>
    <experiments>3</experiments>
</comment>
<comment type="interaction">
    <interactant intactId="EBI-726876">
        <id>Q6NUQ1</id>
    </interactant>
    <interactant intactId="EBI-742459">
        <id>Q9BU76</id>
        <label>MMTAG2</label>
    </interactant>
    <organismsDiffer>false</organismsDiffer>
    <experiments>3</experiments>
</comment>
<comment type="interaction">
    <interactant intactId="EBI-726876">
        <id>Q6NUQ1</id>
    </interactant>
    <interactant intactId="EBI-5662487">
        <id>Q8TDC0</id>
        <label>MYOZ3</label>
    </interactant>
    <organismsDiffer>false</organismsDiffer>
    <experiments>3</experiments>
</comment>
<comment type="interaction">
    <interactant intactId="EBI-726876">
        <id>Q6NUQ1</id>
    </interactant>
    <interactant intactId="EBI-8641936">
        <id>Q15742</id>
        <label>NAB2</label>
    </interactant>
    <organismsDiffer>false</organismsDiffer>
    <experiments>3</experiments>
</comment>
<comment type="interaction">
    <interactant intactId="EBI-726876">
        <id>Q6NUQ1</id>
    </interactant>
    <interactant intactId="EBI-3951858">
        <id>Q16649</id>
        <label>NFIL3</label>
    </interactant>
    <organismsDiffer>false</organismsDiffer>
    <experiments>3</experiments>
</comment>
<comment type="interaction">
    <interactant intactId="EBI-726876">
        <id>Q6NUQ1</id>
    </interactant>
    <interactant intactId="EBI-346930">
        <id>O00459</id>
        <label>PIK3R2</label>
    </interactant>
    <organismsDiffer>false</organismsDiffer>
    <experiments>3</experiments>
</comment>
<comment type="interaction">
    <interactant intactId="EBI-726876">
        <id>Q6NUQ1</id>
    </interactant>
    <interactant intactId="EBI-2568609">
        <id>Q9BSJ6</id>
        <label>PIMREG</label>
    </interactant>
    <organismsDiffer>false</organismsDiffer>
    <experiments>3</experiments>
</comment>
<comment type="interaction">
    <interactant intactId="EBI-726876">
        <id>Q6NUQ1</id>
    </interactant>
    <interactant intactId="EBI-2798416">
        <id>Q99633</id>
        <label>PRPF18</label>
    </interactant>
    <organismsDiffer>false</organismsDiffer>
    <experiments>3</experiments>
</comment>
<comment type="interaction">
    <interactant intactId="EBI-726876">
        <id>Q6NUQ1</id>
    </interactant>
    <interactant intactId="EBI-16430249">
        <id>A0A0S2Z528</id>
        <label>PSTPIP1</label>
    </interactant>
    <organismsDiffer>false</organismsDiffer>
    <experiments>3</experiments>
</comment>
<comment type="interaction">
    <interactant intactId="EBI-726876">
        <id>Q6NUQ1</id>
    </interactant>
    <interactant intactId="EBI-744023">
        <id>Q9BTL3</id>
        <label>RAMAC</label>
    </interactant>
    <organismsDiffer>false</organismsDiffer>
    <experiments>3</experiments>
</comment>
<comment type="interaction">
    <interactant intactId="EBI-726876">
        <id>Q6NUQ1</id>
    </interactant>
    <interactant intactId="EBI-740773">
        <id>Q96IZ5</id>
        <label>RBM41</label>
    </interactant>
    <organismsDiffer>false</organismsDiffer>
    <experiments>6</experiments>
</comment>
<comment type="interaction">
    <interactant intactId="EBI-726876">
        <id>Q6NUQ1</id>
    </interactant>
    <interactant intactId="EBI-10265323">
        <id>Q8N443</id>
        <label>RIBC1</label>
    </interactant>
    <organismsDiffer>false</organismsDiffer>
    <experiments>7</experiments>
</comment>
<comment type="interaction">
    <interactant intactId="EBI-726876">
        <id>Q6NUQ1</id>
    </interactant>
    <interactant intactId="EBI-12235180">
        <id>Q9H2S5</id>
        <label>RNF39</label>
    </interactant>
    <organismsDiffer>false</organismsDiffer>
    <experiments>3</experiments>
</comment>
<comment type="interaction">
    <interactant intactId="EBI-726876">
        <id>Q6NUQ1</id>
    </interactant>
    <interactant intactId="EBI-16428950">
        <id>A0A0S2Z4G9</id>
        <label>RNF6</label>
    </interactant>
    <organismsDiffer>false</organismsDiffer>
    <experiments>3</experiments>
</comment>
<comment type="interaction">
    <interactant intactId="EBI-726876">
        <id>Q6NUQ1</id>
    </interactant>
    <interactant intactId="EBI-10256202">
        <id>Q7L4I2-2</id>
        <label>RSRC2</label>
    </interactant>
    <organismsDiffer>false</organismsDiffer>
    <experiments>3</experiments>
</comment>
<comment type="interaction">
    <interactant intactId="EBI-726876">
        <id>Q6NUQ1</id>
    </interactant>
    <interactant intactId="EBI-10217913">
        <id>Q14D33</id>
        <label>RTP5</label>
    </interactant>
    <organismsDiffer>false</organismsDiffer>
    <experiments>3</experiments>
</comment>
<comment type="interaction">
    <interactant intactId="EBI-726876">
        <id>Q6NUQ1</id>
    </interactant>
    <interactant intactId="EBI-748391">
        <id>Q9BWG6</id>
        <label>SCNM1</label>
    </interactant>
    <organismsDiffer>false</organismsDiffer>
    <experiments>5</experiments>
</comment>
<comment type="interaction">
    <interactant intactId="EBI-726876">
        <id>Q6NUQ1</id>
    </interactant>
    <interactant intactId="EBI-1104535">
        <id>Q86XK3</id>
        <label>SFR1</label>
    </interactant>
    <organismsDiffer>false</organismsDiffer>
    <experiments>4</experiments>
</comment>
<comment type="interaction">
    <interactant intactId="EBI-726876">
        <id>Q6NUQ1</id>
    </interactant>
    <interactant intactId="EBI-743117">
        <id>Q96ES7</id>
        <label>SGF29</label>
    </interactant>
    <organismsDiffer>false</organismsDiffer>
    <experiments>7</experiments>
</comment>
<comment type="interaction">
    <interactant intactId="EBI-726876">
        <id>Q6NUQ1</id>
    </interactant>
    <interactant intactId="EBI-747035">
        <id>Q9H788</id>
        <label>SH2D4A</label>
    </interactant>
    <organismsDiffer>false</organismsDiffer>
    <experiments>6</experiments>
</comment>
<comment type="interaction">
    <interactant intactId="EBI-726876">
        <id>Q6NUQ1</id>
    </interactant>
    <interactant intactId="EBI-10308083">
        <id>Q9H788-2</id>
        <label>SH2D4A</label>
    </interactant>
    <organismsDiffer>false</organismsDiffer>
    <experiments>3</experiments>
</comment>
<comment type="interaction">
    <interactant intactId="EBI-726876">
        <id>Q6NUQ1</id>
    </interactant>
    <interactant intactId="EBI-455078">
        <id>Q969G3</id>
        <label>SMARCE1</label>
    </interactant>
    <organismsDiffer>false</organismsDiffer>
    <experiments>3</experiments>
</comment>
<comment type="interaction">
    <interactant intactId="EBI-726876">
        <id>Q6NUQ1</id>
    </interactant>
    <interactant intactId="EBI-632715">
        <id>Q13573</id>
        <label>SNW1</label>
    </interactant>
    <organismsDiffer>false</organismsDiffer>
    <experiments>7</experiments>
</comment>
<comment type="interaction">
    <interactant intactId="EBI-726876">
        <id>Q6NUQ1</id>
    </interactant>
    <interactant intactId="EBI-1046642">
        <id>O43815</id>
        <label>STRN</label>
    </interactant>
    <organismsDiffer>false</organismsDiffer>
    <experiments>3</experiments>
</comment>
<comment type="interaction">
    <interactant intactId="EBI-726876">
        <id>Q6NUQ1</id>
    </interactant>
    <interactant intactId="EBI-3921347">
        <id>P51687</id>
        <label>SUOX</label>
    </interactant>
    <organismsDiffer>false</organismsDiffer>
    <experiments>3</experiments>
</comment>
<comment type="interaction">
    <interactant intactId="EBI-726876">
        <id>Q6NUQ1</id>
    </interactant>
    <interactant intactId="EBI-747797">
        <id>Q9BSH4</id>
        <label>TACO1</label>
    </interactant>
    <organismsDiffer>false</organismsDiffer>
    <experiments>3</experiments>
</comment>
<comment type="interaction">
    <interactant intactId="EBI-726876">
        <id>Q6NUQ1</id>
    </interactant>
    <interactant intactId="EBI-16431655">
        <id>A0A0S2Z5Z9</id>
        <label>TEX9</label>
    </interactant>
    <organismsDiffer>false</organismsDiffer>
    <experiments>3</experiments>
</comment>
<comment type="interaction">
    <interactant intactId="EBI-726876">
        <id>Q6NUQ1</id>
    </interactant>
    <interactant intactId="EBI-11525489">
        <id>Q86WT6-2</id>
        <label>TRIM69</label>
    </interactant>
    <organismsDiffer>false</organismsDiffer>
    <experiments>3</experiments>
</comment>
<comment type="interaction">
    <interactant intactId="EBI-726876">
        <id>Q6NUQ1</id>
    </interactant>
    <interactant intactId="EBI-2559824">
        <id>Q7Z6J9</id>
        <label>TSEN54</label>
    </interactant>
    <organismsDiffer>false</organismsDiffer>
    <experiments>3</experiments>
</comment>
<comment type="interaction">
    <interactant intactId="EBI-726876">
        <id>Q6NUQ1</id>
    </interactant>
    <interactant intactId="EBI-10687282">
        <id>Q9NRE2</id>
        <label>TSHZ2</label>
    </interactant>
    <organismsDiffer>false</organismsDiffer>
    <experiments>3</experiments>
</comment>
<comment type="interaction">
    <interactant intactId="EBI-726876">
        <id>Q6NUQ1</id>
    </interactant>
    <interactant intactId="EBI-9053916">
        <id>Q63HK5</id>
        <label>TSHZ3</label>
    </interactant>
    <organismsDiffer>false</organismsDiffer>
    <experiments>5</experiments>
</comment>
<comment type="interaction">
    <interactant intactId="EBI-726876">
        <id>Q6NUQ1</id>
    </interactant>
    <interactant intactId="EBI-359793">
        <id>P40222</id>
        <label>TXLNA</label>
    </interactant>
    <organismsDiffer>false</organismsDiffer>
    <experiments>6</experiments>
</comment>
<comment type="interaction">
    <interactant intactId="EBI-726876">
        <id>Q6NUQ1</id>
    </interactant>
    <interactant intactId="EBI-739895">
        <id>Q8N6Y0</id>
        <label>USHBP1</label>
    </interactant>
    <organismsDiffer>false</organismsDiffer>
    <experiments>3</experiments>
</comment>
<comment type="interaction">
    <interactant intactId="EBI-726876">
        <id>Q6NUQ1</id>
    </interactant>
    <interactant intactId="EBI-11737646">
        <id>Q5TAP6</id>
        <label>UTP14C</label>
    </interactant>
    <organismsDiffer>false</organismsDiffer>
    <experiments>3</experiments>
</comment>
<comment type="interaction">
    <interactant intactId="EBI-726876">
        <id>Q6NUQ1</id>
    </interactant>
    <interactant intactId="EBI-2952704">
        <id>Q9P2Y5</id>
        <label>UVRAG</label>
    </interactant>
    <organismsDiffer>false</organismsDiffer>
    <experiments>18</experiments>
</comment>
<comment type="interaction">
    <interactant intactId="EBI-726876">
        <id>Q6NUQ1</id>
    </interactant>
    <interactant intactId="EBI-297568">
        <id>Q9UKW4</id>
        <label>VAV3</label>
    </interactant>
    <organismsDiffer>false</organismsDiffer>
    <experiments>3</experiments>
</comment>
<comment type="interaction">
    <interactant intactId="EBI-726876">
        <id>Q6NUQ1</id>
    </interactant>
    <interactant intactId="EBI-2559305">
        <id>A5D8V6</id>
        <label>VPS37C</label>
    </interactant>
    <organismsDiffer>false</organismsDiffer>
    <experiments>3</experiments>
</comment>
<comment type="interaction">
    <interactant intactId="EBI-726876">
        <id>Q6NUQ1</id>
    </interactant>
    <interactant intactId="EBI-711925">
        <id>Q05516</id>
        <label>ZBTB16</label>
    </interactant>
    <organismsDiffer>false</organismsDiffer>
    <experiments>3</experiments>
</comment>
<comment type="interaction">
    <interactant intactId="EBI-726876">
        <id>Q6NUQ1</id>
    </interactant>
    <interactant intactId="EBI-14104088">
        <id>Q53FD0-2</id>
        <label>ZC2HC1C</label>
    </interactant>
    <organismsDiffer>false</organismsDiffer>
    <experiments>3</experiments>
</comment>
<comment type="interaction">
    <interactant intactId="EBI-726876">
        <id>Q6NUQ1</id>
    </interactant>
    <interactant intactId="EBI-11985915">
        <id>Q5T619</id>
        <label>ZNF648</label>
    </interactant>
    <organismsDiffer>false</organismsDiffer>
    <experiments>3</experiments>
</comment>
<comment type="interaction">
    <interactant intactId="EBI-726876">
        <id>Q6NUQ1</id>
    </interactant>
    <interactant intactId="EBI-625509">
        <id>Q8N720</id>
        <label>ZNF655</label>
    </interactant>
    <organismsDiffer>false</organismsDiffer>
    <experiments>5</experiments>
</comment>
<comment type="interaction">
    <interactant intactId="EBI-726876">
        <id>Q6NUQ1</id>
    </interactant>
    <interactant intactId="EBI-16429014">
        <id>A0A0S2Z5X4</id>
        <label>ZNF688</label>
    </interactant>
    <organismsDiffer>false</organismsDiffer>
    <experiments>3</experiments>
</comment>
<comment type="interaction">
    <interactant intactId="EBI-726876">
        <id>Q6NUQ1</id>
    </interactant>
    <interactant intactId="EBI-16429989">
        <id>A0A0S2Z6P0</id>
        <label>ZNF688</label>
    </interactant>
    <organismsDiffer>false</organismsDiffer>
    <experiments>3</experiments>
</comment>
<comment type="interaction">
    <interactant intactId="EBI-726876">
        <id>Q6NUQ1</id>
    </interactant>
    <interactant intactId="EBI-10265733">
        <id>Q8N508</id>
        <label>ZNF697</label>
    </interactant>
    <organismsDiffer>false</organismsDiffer>
    <experiments>3</experiments>
</comment>
<comment type="interaction">
    <interactant intactId="EBI-726876">
        <id>Q6NUQ1</id>
    </interactant>
    <interactant intactId="EBI-5667516">
        <id>Q9Y2P0</id>
        <label>ZNF835</label>
    </interactant>
    <organismsDiffer>false</organismsDiffer>
    <experiments>3</experiments>
</comment>
<comment type="interaction">
    <interactant intactId="EBI-726876">
        <id>Q6NUQ1</id>
    </interactant>
    <interactant intactId="EBI-17968892">
        <id>A6NJL1</id>
        <label>ZSCAN5B</label>
    </interactant>
    <organismsDiffer>false</organismsDiffer>
    <experiments>3</experiments>
</comment>
<comment type="interaction">
    <interactant intactId="EBI-726876">
        <id>Q6NUQ1</id>
    </interactant>
    <interactant intactId="EBI-1001217">
        <id>O43264</id>
        <label>ZW10</label>
    </interactant>
    <organismsDiffer>false</organismsDiffer>
    <experiments>18</experiments>
</comment>
<comment type="subcellular location">
    <subcellularLocation>
        <location>Cytoplasm</location>
    </subcellularLocation>
    <subcellularLocation>
        <location>Endoplasmic reticulum membrane</location>
        <topology>Peripheral membrane protein</topology>
    </subcellularLocation>
</comment>
<comment type="developmental stage">
    <text evidence="4">Expressed throughout the cell cycle.</text>
</comment>
<comment type="disease" evidence="11">
    <disease id="DI-05669">
        <name>Infantile liver failure syndrome 3</name>
        <acronym>ILFS3</acronym>
        <description>A form of infantile liver failure syndrome, a life-threatening disorder of hepatic function that manifests with acute liver failure in the first months or years of life. ILFS3 is an autosomal recessive form characterized by recurrent episodes of acute liver failure often triggered by infection or fever. Affected individuals also have skeletal anomalies of the vertebral bodies and femoral heads.</description>
        <dbReference type="MIM" id="618641"/>
    </disease>
    <text>The disease is caused by variants affecting the gene represented in this entry.</text>
</comment>
<comment type="miscellaneous">
    <text>According to PubMed:11096100, a longer form, which may be due to the differential initiation of translation using a non-AUG codon, may exist. However, the existence of such form has not been clearly demonstrated.</text>
</comment>
<comment type="similarity">
    <text evidence="12">Belongs to the RINT1 family.</text>
</comment>
<comment type="sequence caution" evidence="12">
    <conflict type="erroneous initiation">
        <sequence resource="EMBL-CDS" id="AAG42101"/>
    </conflict>
</comment>
<comment type="sequence caution" evidence="12">
    <conflict type="erroneous gene model prediction">
        <sequence resource="EMBL-CDS" id="AAQ96849"/>
    </conflict>
</comment>
<comment type="sequence caution" evidence="12">
    <conflict type="erroneous gene model prediction">
        <sequence resource="EMBL-CDS" id="AAQ96850"/>
    </conflict>
</comment>
<comment type="sequence caution" evidence="12">
    <conflict type="erroneous initiation">
        <sequence resource="EMBL-CDS" id="BAB13910"/>
    </conflict>
</comment>
<accession>Q6NUQ1</accession>
<accession>Q75MG9</accession>
<accession>Q75MH0</accession>
<accession>Q96IW8</accession>
<accession>Q9H229</accession>
<accession>Q9HAD9</accession>
<protein>
    <recommendedName>
        <fullName>RAD50-interacting protein 1</fullName>
    </recommendedName>
    <alternativeName>
        <fullName>RAD50 interactor 1</fullName>
        <shortName>HsRINT-1</shortName>
        <shortName>RINT-1</shortName>
    </alternativeName>
</protein>
<sequence length="792" mass="90632">MLPAGEIGASPAAPCCSESGDERKNLEEKSDINVTVLIGSKQVSEGTDNGDLPSYVSAFIEKEVGNDLKSLKKLDKLIEQRTVSKMQLEEQVLTISSEIPKRIRSALKNAEESKQFLNQFLEQETHLFSAINSHLLTAQPWMDDLGTMISQIEEIERHLAYLKWISQIEELSDNIQQYLMTNNVPEAASTLVSMAELDIKLQESSCTHLLGFMRATVKFWHKILKDKLTSDFEEILAQLHWPFIAPPQSQTVGLSRPASAPEIYSYLETLFCQLLKLQTSDELLTEPKQLPEKYSLPASPSVILPIQVMLTPLQKRFRYHFRGNRQTNVLSKPEWYLAQVLMWIGNHTEFLDEKIQPILDKVGSLVNARLEFSRGLMMLVLEKLATDIPCLLYDDNLFCHLVDEVLLFERELHSVHGYPGTFASCMHILSEETCFQRWLTVERKFALQKMDSMLSSEAAWVSQYKDITDVDEMKVPDCAETFMTLLLVITDRYKNLPTASRKLQFLELQKDLVDDFRIRLTQVMKEETRASLGFRYCAILNAVNYISTVLADWADNVFFLQLQQAALEVFAENNTLSKLQLGQLASMESSVFDDMINLLERLKHDMLTRQVDHVFREVKDAAKLYKKERWLSLPSQSEQAVMSLSSSACPLLLTLRDHLLQLEQQLCFSLFKIFWQMLVEKLDVYIYQEIILANHFNEGGAAQLQFDMTRNLFPLFSHYCKRPENYFKHIKEACIVLNLNVGSALLLKDVLQSASGQLPATAALNEVGIYKLAQQDVEILLNLRTNWPNTGK</sequence>
<organism>
    <name type="scientific">Homo sapiens</name>
    <name type="common">Human</name>
    <dbReference type="NCBI Taxonomy" id="9606"/>
    <lineage>
        <taxon>Eukaryota</taxon>
        <taxon>Metazoa</taxon>
        <taxon>Chordata</taxon>
        <taxon>Craniata</taxon>
        <taxon>Vertebrata</taxon>
        <taxon>Euteleostomi</taxon>
        <taxon>Mammalia</taxon>
        <taxon>Eutheria</taxon>
        <taxon>Euarchontoglires</taxon>
        <taxon>Primates</taxon>
        <taxon>Haplorrhini</taxon>
        <taxon>Catarrhini</taxon>
        <taxon>Hominidae</taxon>
        <taxon>Homo</taxon>
    </lineage>
</organism>
<proteinExistence type="evidence at protein level"/>
<name>RINT1_HUMAN</name>
<evidence type="ECO:0000255" key="1"/>
<evidence type="ECO:0000255" key="2">
    <source>
        <dbReference type="PROSITE-ProRule" id="PRU00717"/>
    </source>
</evidence>
<evidence type="ECO:0000256" key="3">
    <source>
        <dbReference type="SAM" id="MobiDB-lite"/>
    </source>
</evidence>
<evidence type="ECO:0000269" key="4">
    <source>
    </source>
</evidence>
<evidence type="ECO:0000269" key="5">
    <source>
    </source>
</evidence>
<evidence type="ECO:0000269" key="6">
    <source>
    </source>
</evidence>
<evidence type="ECO:0000269" key="7">
    <source>
    </source>
</evidence>
<evidence type="ECO:0000269" key="8">
    <source>
    </source>
</evidence>
<evidence type="ECO:0000269" key="9">
    <source>
    </source>
</evidence>
<evidence type="ECO:0000269" key="10">
    <source>
    </source>
</evidence>
<evidence type="ECO:0000269" key="11">
    <source>
    </source>
</evidence>
<evidence type="ECO:0000305" key="12"/>
<feature type="chain" id="PRO_0000097349" description="RAD50-interacting protein 1">
    <location>
        <begin position="1"/>
        <end position="792"/>
    </location>
</feature>
<feature type="domain" description="RINT1/TIP20" evidence="2">
    <location>
        <begin position="220"/>
        <end position="792"/>
    </location>
</feature>
<feature type="region of interest" description="Disordered" evidence="3">
    <location>
        <begin position="1"/>
        <end position="22"/>
    </location>
</feature>
<feature type="coiled-coil region" evidence="1">
    <location>
        <begin position="103"/>
        <end position="124"/>
    </location>
</feature>
<feature type="sequence variant" id="VAR_051322" description="In dbSNP:rs11556986.">
    <original>S</original>
    <variation>C</variation>
    <location>
        <position position="40"/>
    </location>
</feature>
<feature type="sequence variant" id="VAR_083238" description="In ILFS3; dbSNP:rs545894353." evidence="11">
    <original>A</original>
    <variation>T</variation>
    <location>
        <position position="368"/>
    </location>
</feature>
<feature type="sequence variant" id="VAR_083239" description="In ILFS3; dbSNP:rs1562849964." evidence="11">
    <original>L</original>
    <variation>P</variation>
    <location>
        <position position="370"/>
    </location>
</feature>
<feature type="sequence variant" id="VAR_083240" description="In ILFS3." evidence="11">
    <location>
        <begin position="618"/>
        <end position="619"/>
    </location>
</feature>
<feature type="sequence variant" id="VAR_034418" description="In dbSNP:rs35971380.">
    <original>F</original>
    <variation>S</variation>
    <location>
        <position position="668"/>
    </location>
</feature>
<feature type="sequence variant" id="VAR_034419" description="In dbSNP:rs34310648.">
    <original>P</original>
    <variation>L</variation>
    <location>
        <position position="759"/>
    </location>
</feature>
<feature type="sequence conflict" description="In Ref. 4." evidence="12" ref="4">
    <original>L</original>
    <variation>P</variation>
    <location>
        <position position="758"/>
    </location>
</feature>
<feature type="sequence conflict" description="In Ref. 1; AAG42101." evidence="12" ref="1">
    <original>PA</original>
    <variation>ST</variation>
    <location>
        <begin position="759"/>
        <end position="760"/>
    </location>
</feature>
<gene>
    <name type="primary">RINT1</name>
</gene>
<reference key="1">
    <citation type="journal article" date="2001" name="J. Biol. Chem.">
        <title>RINT-1, a novel Rad50-interacting protein, participates in radiation-induced G2/M checkpoint control.</title>
        <authorList>
            <person name="Xiao J."/>
            <person name="Liu C.-C."/>
            <person name="Chen P.-L."/>
            <person name="Lee W.-H."/>
        </authorList>
    </citation>
    <scope>NUCLEOTIDE SEQUENCE [MRNA]</scope>
    <scope>FUNCTION</scope>
    <scope>DEVELOPMENTAL STAGE</scope>
    <scope>INTERACTION WITH RAD50</scope>
    <source>
        <tissue>B-cell</tissue>
    </source>
</reference>
<reference key="2">
    <citation type="journal article" date="2003" name="Nature">
        <title>The DNA sequence of human chromosome 7.</title>
        <authorList>
            <person name="Hillier L.W."/>
            <person name="Fulton R.S."/>
            <person name="Fulton L.A."/>
            <person name="Graves T.A."/>
            <person name="Pepin K.H."/>
            <person name="Wagner-McPherson C."/>
            <person name="Layman D."/>
            <person name="Maas J."/>
            <person name="Jaeger S."/>
            <person name="Walker R."/>
            <person name="Wylie K."/>
            <person name="Sekhon M."/>
            <person name="Becker M.C."/>
            <person name="O'Laughlin M.D."/>
            <person name="Schaller M.E."/>
            <person name="Fewell G.A."/>
            <person name="Delehaunty K.D."/>
            <person name="Miner T.L."/>
            <person name="Nash W.E."/>
            <person name="Cordes M."/>
            <person name="Du H."/>
            <person name="Sun H."/>
            <person name="Edwards J."/>
            <person name="Bradshaw-Cordum H."/>
            <person name="Ali J."/>
            <person name="Andrews S."/>
            <person name="Isak A."/>
            <person name="Vanbrunt A."/>
            <person name="Nguyen C."/>
            <person name="Du F."/>
            <person name="Lamar B."/>
            <person name="Courtney L."/>
            <person name="Kalicki J."/>
            <person name="Ozersky P."/>
            <person name="Bielicki L."/>
            <person name="Scott K."/>
            <person name="Holmes A."/>
            <person name="Harkins R."/>
            <person name="Harris A."/>
            <person name="Strong C.M."/>
            <person name="Hou S."/>
            <person name="Tomlinson C."/>
            <person name="Dauphin-Kohlberg S."/>
            <person name="Kozlowicz-Reilly A."/>
            <person name="Leonard S."/>
            <person name="Rohlfing T."/>
            <person name="Rock S.M."/>
            <person name="Tin-Wollam A.-M."/>
            <person name="Abbott A."/>
            <person name="Minx P."/>
            <person name="Maupin R."/>
            <person name="Strowmatt C."/>
            <person name="Latreille P."/>
            <person name="Miller N."/>
            <person name="Johnson D."/>
            <person name="Murray J."/>
            <person name="Woessner J.P."/>
            <person name="Wendl M.C."/>
            <person name="Yang S.-P."/>
            <person name="Schultz B.R."/>
            <person name="Wallis J.W."/>
            <person name="Spieth J."/>
            <person name="Bieri T.A."/>
            <person name="Nelson J.O."/>
            <person name="Berkowicz N."/>
            <person name="Wohldmann P.E."/>
            <person name="Cook L.L."/>
            <person name="Hickenbotham M.T."/>
            <person name="Eldred J."/>
            <person name="Williams D."/>
            <person name="Bedell J.A."/>
            <person name="Mardis E.R."/>
            <person name="Clifton S.W."/>
            <person name="Chissoe S.L."/>
            <person name="Marra M.A."/>
            <person name="Raymond C."/>
            <person name="Haugen E."/>
            <person name="Gillett W."/>
            <person name="Zhou Y."/>
            <person name="James R."/>
            <person name="Phelps K."/>
            <person name="Iadanoto S."/>
            <person name="Bubb K."/>
            <person name="Simms E."/>
            <person name="Levy R."/>
            <person name="Clendenning J."/>
            <person name="Kaul R."/>
            <person name="Kent W.J."/>
            <person name="Furey T.S."/>
            <person name="Baertsch R.A."/>
            <person name="Brent M.R."/>
            <person name="Keibler E."/>
            <person name="Flicek P."/>
            <person name="Bork P."/>
            <person name="Suyama M."/>
            <person name="Bailey J.A."/>
            <person name="Portnoy M.E."/>
            <person name="Torrents D."/>
            <person name="Chinwalla A.T."/>
            <person name="Gish W.R."/>
            <person name="Eddy S.R."/>
            <person name="McPherson J.D."/>
            <person name="Olson M.V."/>
            <person name="Eichler E.E."/>
            <person name="Green E.D."/>
            <person name="Waterston R.H."/>
            <person name="Wilson R.K."/>
        </authorList>
    </citation>
    <scope>NUCLEOTIDE SEQUENCE [LARGE SCALE GENOMIC DNA]</scope>
</reference>
<reference key="3">
    <citation type="journal article" date="2004" name="Genome Res.">
        <title>The status, quality, and expansion of the NIH full-length cDNA project: the Mammalian Gene Collection (MGC).</title>
        <authorList>
            <consortium name="The MGC Project Team"/>
        </authorList>
    </citation>
    <scope>NUCLEOTIDE SEQUENCE [LARGE SCALE MRNA]</scope>
    <source>
        <tissue>Brain</tissue>
        <tissue>Testis</tissue>
    </source>
</reference>
<reference key="4">
    <citation type="journal article" date="2004" name="Nat. Genet.">
        <title>Complete sequencing and characterization of 21,243 full-length human cDNAs.</title>
        <authorList>
            <person name="Ota T."/>
            <person name="Suzuki Y."/>
            <person name="Nishikawa T."/>
            <person name="Otsuki T."/>
            <person name="Sugiyama T."/>
            <person name="Irie R."/>
            <person name="Wakamatsu A."/>
            <person name="Hayashi K."/>
            <person name="Sato H."/>
            <person name="Nagai K."/>
            <person name="Kimura K."/>
            <person name="Makita H."/>
            <person name="Sekine M."/>
            <person name="Obayashi M."/>
            <person name="Nishi T."/>
            <person name="Shibahara T."/>
            <person name="Tanaka T."/>
            <person name="Ishii S."/>
            <person name="Yamamoto J."/>
            <person name="Saito K."/>
            <person name="Kawai Y."/>
            <person name="Isono Y."/>
            <person name="Nakamura Y."/>
            <person name="Nagahari K."/>
            <person name="Murakami K."/>
            <person name="Yasuda T."/>
            <person name="Iwayanagi T."/>
            <person name="Wagatsuma M."/>
            <person name="Shiratori A."/>
            <person name="Sudo H."/>
            <person name="Hosoiri T."/>
            <person name="Kaku Y."/>
            <person name="Kodaira H."/>
            <person name="Kondo H."/>
            <person name="Sugawara M."/>
            <person name="Takahashi M."/>
            <person name="Kanda K."/>
            <person name="Yokoi T."/>
            <person name="Furuya T."/>
            <person name="Kikkawa E."/>
            <person name="Omura Y."/>
            <person name="Abe K."/>
            <person name="Kamihara K."/>
            <person name="Katsuta N."/>
            <person name="Sato K."/>
            <person name="Tanikawa M."/>
            <person name="Yamazaki M."/>
            <person name="Ninomiya K."/>
            <person name="Ishibashi T."/>
            <person name="Yamashita H."/>
            <person name="Murakawa K."/>
            <person name="Fujimori K."/>
            <person name="Tanai H."/>
            <person name="Kimata M."/>
            <person name="Watanabe M."/>
            <person name="Hiraoka S."/>
            <person name="Chiba Y."/>
            <person name="Ishida S."/>
            <person name="Ono Y."/>
            <person name="Takiguchi S."/>
            <person name="Watanabe S."/>
            <person name="Yosida M."/>
            <person name="Hotuta T."/>
            <person name="Kusano J."/>
            <person name="Kanehori K."/>
            <person name="Takahashi-Fujii A."/>
            <person name="Hara H."/>
            <person name="Tanase T.-O."/>
            <person name="Nomura Y."/>
            <person name="Togiya S."/>
            <person name="Komai F."/>
            <person name="Hara R."/>
            <person name="Takeuchi K."/>
            <person name="Arita M."/>
            <person name="Imose N."/>
            <person name="Musashino K."/>
            <person name="Yuuki H."/>
            <person name="Oshima A."/>
            <person name="Sasaki N."/>
            <person name="Aotsuka S."/>
            <person name="Yoshikawa Y."/>
            <person name="Matsunawa H."/>
            <person name="Ichihara T."/>
            <person name="Shiohata N."/>
            <person name="Sano S."/>
            <person name="Moriya S."/>
            <person name="Momiyama H."/>
            <person name="Satoh N."/>
            <person name="Takami S."/>
            <person name="Terashima Y."/>
            <person name="Suzuki O."/>
            <person name="Nakagawa S."/>
            <person name="Senoh A."/>
            <person name="Mizoguchi H."/>
            <person name="Goto Y."/>
            <person name="Shimizu F."/>
            <person name="Wakebe H."/>
            <person name="Hishigaki H."/>
            <person name="Watanabe T."/>
            <person name="Sugiyama A."/>
            <person name="Takemoto M."/>
            <person name="Kawakami B."/>
            <person name="Yamazaki M."/>
            <person name="Watanabe K."/>
            <person name="Kumagai A."/>
            <person name="Itakura S."/>
            <person name="Fukuzumi Y."/>
            <person name="Fujimori Y."/>
            <person name="Komiyama M."/>
            <person name="Tashiro H."/>
            <person name="Tanigami A."/>
            <person name="Fujiwara T."/>
            <person name="Ono T."/>
            <person name="Yamada K."/>
            <person name="Fujii Y."/>
            <person name="Ozaki K."/>
            <person name="Hirao M."/>
            <person name="Ohmori Y."/>
            <person name="Kawabata A."/>
            <person name="Hikiji T."/>
            <person name="Kobatake N."/>
            <person name="Inagaki H."/>
            <person name="Ikema Y."/>
            <person name="Okamoto S."/>
            <person name="Okitani R."/>
            <person name="Kawakami T."/>
            <person name="Noguchi S."/>
            <person name="Itoh T."/>
            <person name="Shigeta K."/>
            <person name="Senba T."/>
            <person name="Matsumura K."/>
            <person name="Nakajima Y."/>
            <person name="Mizuno T."/>
            <person name="Morinaga M."/>
            <person name="Sasaki M."/>
            <person name="Togashi T."/>
            <person name="Oyama M."/>
            <person name="Hata H."/>
            <person name="Watanabe M."/>
            <person name="Komatsu T."/>
            <person name="Mizushima-Sugano J."/>
            <person name="Satoh T."/>
            <person name="Shirai Y."/>
            <person name="Takahashi Y."/>
            <person name="Nakagawa K."/>
            <person name="Okumura K."/>
            <person name="Nagase T."/>
            <person name="Nomura N."/>
            <person name="Kikuchi H."/>
            <person name="Masuho Y."/>
            <person name="Yamashita R."/>
            <person name="Nakai K."/>
            <person name="Yada T."/>
            <person name="Nakamura Y."/>
            <person name="Ohara O."/>
            <person name="Isogai T."/>
            <person name="Sugano S."/>
        </authorList>
    </citation>
    <scope>NUCLEOTIDE SEQUENCE [LARGE SCALE MRNA] OF 367-792</scope>
    <source>
        <tissue>Embryo</tissue>
    </source>
</reference>
<reference key="5">
    <citation type="journal article" date="2004" name="EMBO J.">
        <title>Implication of ZW10 in membrane trafficking between the endoplasmic reticulum and Golgi.</title>
        <authorList>
            <person name="Hirose H."/>
            <person name="Arasaki K."/>
            <person name="Dohmae N."/>
            <person name="Takio K."/>
            <person name="Hatsuzawa K."/>
            <person name="Nagahama M."/>
            <person name="Tani K."/>
            <person name="Yamamoto A."/>
            <person name="Tohyama M."/>
            <person name="Tagaya M."/>
        </authorList>
    </citation>
    <scope>PARTIAL PROTEIN SEQUENCE</scope>
    <scope>IDENTIFICATION BY MASS SPECTROMETRY</scope>
    <scope>SUBCELLULAR LOCATION</scope>
    <scope>INTERACTION WITH ZW10</scope>
    <scope>IDENTIFICATION IN A COMPLEX WITH SEC22B; STX18; USE1L AND ZW10</scope>
</reference>
<reference key="6">
    <citation type="journal article" date="2004" name="EMBO J.">
        <title>Involvement of BNIP1 in apoptosis and endoplasmic reticulum membrane fusion.</title>
        <authorList>
            <person name="Nakajima K."/>
            <person name="Hirose H."/>
            <person name="Taniguchi M."/>
            <person name="Kurashina H."/>
            <person name="Arasaki K."/>
            <person name="Nagahama M."/>
            <person name="Tani K."/>
            <person name="Yamamoto A."/>
            <person name="Tagaya M."/>
        </authorList>
    </citation>
    <scope>SUBCELLULAR LOCATION</scope>
    <scope>INTERACTION WITH BNIP1</scope>
</reference>
<reference key="7">
    <citation type="journal article" date="2006" name="Mol. Cell">
        <title>The Rb-related p130 protein controls telomere lengthening through an interaction with a Rad50-interacting protein, RINT-1.</title>
        <authorList>
            <person name="Kong L.-J."/>
            <person name="Meloni A.R."/>
            <person name="Nevins J.R."/>
        </authorList>
    </citation>
    <scope>FUNCTION</scope>
    <scope>INTERACTION WITH RBL2</scope>
</reference>
<reference key="8">
    <citation type="journal article" date="2009" name="Mol. Biol. Cell">
        <title>Identification of the neuroblastoma-amplified gene product as a component of the syntaxin 18 complex implicated in Golgi-to-endoplasmic reticulum retrograde transport.</title>
        <authorList>
            <person name="Aoki T."/>
            <person name="Ichimura S."/>
            <person name="Itoh A."/>
            <person name="Kuramoto M."/>
            <person name="Shinkawa T."/>
            <person name="Isobe T."/>
            <person name="Tagaya M."/>
        </authorList>
    </citation>
    <scope>SUBUNIT</scope>
</reference>
<reference key="9">
    <citation type="journal article" date="2010" name="Structure">
        <title>Structural analysis of the RZZ complex reveals common ancestry with multisubunit vesicle tethering machinery.</title>
        <authorList>
            <person name="Civril F."/>
            <person name="Wehenkel A."/>
            <person name="Giorgi F.M."/>
            <person name="Santaguida S."/>
            <person name="Di Fonzo A."/>
            <person name="Grigorean G."/>
            <person name="Ciccarelli F.D."/>
            <person name="Musacchio A."/>
        </authorList>
    </citation>
    <scope>IDENTIFICATION IN THE NRZ COMPLEX</scope>
</reference>
<reference key="10">
    <citation type="journal article" date="2011" name="BMC Syst. Biol.">
        <title>Initial characterization of the human central proteome.</title>
        <authorList>
            <person name="Burkard T.R."/>
            <person name="Planyavsky M."/>
            <person name="Kaupe I."/>
            <person name="Breitwieser F.P."/>
            <person name="Buerckstuemmer T."/>
            <person name="Bennett K.L."/>
            <person name="Superti-Furga G."/>
            <person name="Colinge J."/>
        </authorList>
    </citation>
    <scope>IDENTIFICATION BY MASS SPECTROMETRY [LARGE SCALE ANALYSIS]</scope>
</reference>
<reference key="11">
    <citation type="journal article" date="2013" name="Nat. Cell Biol.">
        <title>PtdIns(3)P-bound UVRAG coordinates Golgi-ER retrograde and Atg9 transport by differential interactions with the ER tether and the beclin 1 complex.</title>
        <authorList>
            <person name="He S."/>
            <person name="Ni D."/>
            <person name="Ma B."/>
            <person name="Lee J.H."/>
            <person name="Zhang T."/>
            <person name="Ghozalli I."/>
            <person name="Pirooz S.D."/>
            <person name="Zhao Z."/>
            <person name="Bharatham N."/>
            <person name="Li B."/>
            <person name="Oh S."/>
            <person name="Lee W.H."/>
            <person name="Takahashi Y."/>
            <person name="Wang H.G."/>
            <person name="Minassian A."/>
            <person name="Feng P."/>
            <person name="Deretic V."/>
            <person name="Pepperkok R."/>
            <person name="Tagaya M."/>
            <person name="Yoon H.S."/>
            <person name="Liang C."/>
        </authorList>
    </citation>
    <scope>INTERACTION WITH UVRAG</scope>
</reference>
<reference key="12">
    <citation type="journal article" date="2014" name="J. Proteomics">
        <title>An enzyme assisted RP-RPLC approach for in-depth analysis of human liver phosphoproteome.</title>
        <authorList>
            <person name="Bian Y."/>
            <person name="Song C."/>
            <person name="Cheng K."/>
            <person name="Dong M."/>
            <person name="Wang F."/>
            <person name="Huang J."/>
            <person name="Sun D."/>
            <person name="Wang L."/>
            <person name="Ye M."/>
            <person name="Zou H."/>
        </authorList>
    </citation>
    <scope>IDENTIFICATION BY MASS SPECTROMETRY [LARGE SCALE ANALYSIS]</scope>
    <source>
        <tissue>Liver</tissue>
    </source>
</reference>
<reference key="13">
    <citation type="journal article" date="2015" name="Proteomics">
        <title>N-terminome analysis of the human mitochondrial proteome.</title>
        <authorList>
            <person name="Vaca Jacome A.S."/>
            <person name="Rabilloud T."/>
            <person name="Schaeffer-Reiss C."/>
            <person name="Rompais M."/>
            <person name="Ayoub D."/>
            <person name="Lane L."/>
            <person name="Bairoch A."/>
            <person name="Van Dorsselaer A."/>
            <person name="Carapito C."/>
        </authorList>
    </citation>
    <scope>IDENTIFICATION BY MASS SPECTROMETRY [LARGE SCALE ANALYSIS]</scope>
</reference>
<reference key="14">
    <citation type="journal article" date="2019" name="Am. J. Hum. Genet.">
        <title>RINT1 bi-allelic variations cause infantile-onset recurrent acute liver failure and skeletal abnormalities.</title>
        <authorList>
            <person name="Cousin M.A."/>
            <person name="Conboy E."/>
            <person name="Wang J.S."/>
            <person name="Lenz D."/>
            <person name="Schwab T.L."/>
            <person name="Williams M."/>
            <person name="Abraham R.S."/>
            <person name="Barnett S."/>
            <person name="El-Youssef M."/>
            <person name="Graham R.P."/>
            <person name="Gutierrez Sanchez L.H."/>
            <person name="Hasadsri L."/>
            <person name="Hoffmann G.F."/>
            <person name="Hull N.C."/>
            <person name="Kopajtich R."/>
            <person name="Kovacs-Nagy R."/>
            <person name="Li J.Q."/>
            <person name="Marx-Berger D."/>
            <person name="McLin V."/>
            <person name="McNiven M.A."/>
            <person name="Mounajjed T."/>
            <person name="Prokisch H."/>
            <person name="Rymen D."/>
            <person name="Schulze R.J."/>
            <person name="Staufner C."/>
            <person name="Yang Y."/>
            <person name="Clark K.J."/>
            <person name="Lanpher B.C."/>
            <person name="Klee E.W."/>
        </authorList>
    </citation>
    <scope>INVOLVEMENT IN ILFS3</scope>
    <scope>VARIANTS ILFS3 THR-368; PRO-370 AND 618-VAL-LYS-619 DEL</scope>
</reference>
<dbReference type="EMBL" id="AF317622">
    <property type="protein sequence ID" value="AAG42101.1"/>
    <property type="status" value="ALT_INIT"/>
    <property type="molecule type" value="mRNA"/>
</dbReference>
<dbReference type="EMBL" id="AC073073">
    <property type="protein sequence ID" value="AAQ96849.1"/>
    <property type="status" value="ALT_SEQ"/>
    <property type="molecule type" value="Genomic_DNA"/>
</dbReference>
<dbReference type="EMBL" id="AC073073">
    <property type="protein sequence ID" value="AAQ96850.1"/>
    <property type="status" value="ALT_SEQ"/>
    <property type="molecule type" value="Genomic_DNA"/>
</dbReference>
<dbReference type="EMBL" id="BC007120">
    <property type="protein sequence ID" value="AAH07120.2"/>
    <property type="molecule type" value="mRNA"/>
</dbReference>
<dbReference type="EMBL" id="BC068483">
    <property type="protein sequence ID" value="AAH68483.1"/>
    <property type="molecule type" value="mRNA"/>
</dbReference>
<dbReference type="EMBL" id="AK021847">
    <property type="protein sequence ID" value="BAB13910.1"/>
    <property type="status" value="ALT_INIT"/>
    <property type="molecule type" value="mRNA"/>
</dbReference>
<dbReference type="CCDS" id="CCDS34726.1"/>
<dbReference type="RefSeq" id="NP_068749.3">
    <property type="nucleotide sequence ID" value="NM_021930.5"/>
</dbReference>
<dbReference type="SMR" id="Q6NUQ1"/>
<dbReference type="BioGRID" id="121942">
    <property type="interactions" value="241"/>
</dbReference>
<dbReference type="ComplexPortal" id="CPX-6201">
    <property type="entry name" value="NRZ tethering complex"/>
</dbReference>
<dbReference type="CORUM" id="Q6NUQ1"/>
<dbReference type="DIP" id="DIP-36477N"/>
<dbReference type="FunCoup" id="Q6NUQ1">
    <property type="interactions" value="4352"/>
</dbReference>
<dbReference type="IntAct" id="Q6NUQ1">
    <property type="interactions" value="178"/>
</dbReference>
<dbReference type="MINT" id="Q6NUQ1"/>
<dbReference type="STRING" id="9606.ENSP00000257700"/>
<dbReference type="GlyCosmos" id="Q6NUQ1">
    <property type="glycosylation" value="1 site, 1 glycan"/>
</dbReference>
<dbReference type="GlyGen" id="Q6NUQ1">
    <property type="glycosylation" value="2 sites, 1 O-linked glycan (2 sites)"/>
</dbReference>
<dbReference type="iPTMnet" id="Q6NUQ1"/>
<dbReference type="PhosphoSitePlus" id="Q6NUQ1"/>
<dbReference type="SwissPalm" id="Q6NUQ1"/>
<dbReference type="BioMuta" id="RINT1"/>
<dbReference type="DMDM" id="71152944"/>
<dbReference type="jPOST" id="Q6NUQ1"/>
<dbReference type="MassIVE" id="Q6NUQ1"/>
<dbReference type="PaxDb" id="9606-ENSP00000257700"/>
<dbReference type="PeptideAtlas" id="Q6NUQ1"/>
<dbReference type="ProteomicsDB" id="66701"/>
<dbReference type="Pumba" id="Q6NUQ1"/>
<dbReference type="Antibodypedia" id="17090">
    <property type="antibodies" value="107 antibodies from 22 providers"/>
</dbReference>
<dbReference type="DNASU" id="60561"/>
<dbReference type="Ensembl" id="ENST00000257700.7">
    <property type="protein sequence ID" value="ENSP00000257700.2"/>
    <property type="gene ID" value="ENSG00000135249.8"/>
</dbReference>
<dbReference type="GeneID" id="60561"/>
<dbReference type="KEGG" id="hsa:60561"/>
<dbReference type="MANE-Select" id="ENST00000257700.7">
    <property type="protein sequence ID" value="ENSP00000257700.2"/>
    <property type="RefSeq nucleotide sequence ID" value="NM_021930.6"/>
    <property type="RefSeq protein sequence ID" value="NP_068749.3"/>
</dbReference>
<dbReference type="UCSC" id="uc003vda.1">
    <property type="organism name" value="human"/>
</dbReference>
<dbReference type="AGR" id="HGNC:21876"/>
<dbReference type="CTD" id="60561"/>
<dbReference type="DisGeNET" id="60561"/>
<dbReference type="GeneCards" id="RINT1"/>
<dbReference type="HGNC" id="HGNC:21876">
    <property type="gene designation" value="RINT1"/>
</dbReference>
<dbReference type="HPA" id="ENSG00000135249">
    <property type="expression patterns" value="Low tissue specificity"/>
</dbReference>
<dbReference type="MalaCards" id="RINT1"/>
<dbReference type="MIM" id="610089">
    <property type="type" value="gene"/>
</dbReference>
<dbReference type="MIM" id="618641">
    <property type="type" value="phenotype"/>
</dbReference>
<dbReference type="neXtProt" id="NX_Q6NUQ1"/>
<dbReference type="OpenTargets" id="ENSG00000135249"/>
<dbReference type="Orphanet" id="464724">
    <property type="disease" value="Fever-associated acute infantile liver failure syndrome"/>
</dbReference>
<dbReference type="PharmGKB" id="PA143485595"/>
<dbReference type="VEuPathDB" id="HostDB:ENSG00000135249"/>
<dbReference type="eggNOG" id="KOG2218">
    <property type="taxonomic scope" value="Eukaryota"/>
</dbReference>
<dbReference type="GeneTree" id="ENSGT00390000017006"/>
<dbReference type="HOGENOM" id="CLU_020201_0_0_1"/>
<dbReference type="InParanoid" id="Q6NUQ1"/>
<dbReference type="OMA" id="GMTWEVL"/>
<dbReference type="OrthoDB" id="2189254at2759"/>
<dbReference type="PAN-GO" id="Q6NUQ1">
    <property type="GO annotations" value="3 GO annotations based on evolutionary models"/>
</dbReference>
<dbReference type="PhylomeDB" id="Q6NUQ1"/>
<dbReference type="TreeFam" id="TF324274"/>
<dbReference type="PathwayCommons" id="Q6NUQ1"/>
<dbReference type="Reactome" id="R-HSA-6811434">
    <property type="pathway name" value="COPI-dependent Golgi-to-ER retrograde traffic"/>
</dbReference>
<dbReference type="SignaLink" id="Q6NUQ1"/>
<dbReference type="SIGNOR" id="Q6NUQ1"/>
<dbReference type="BioGRID-ORCS" id="60561">
    <property type="hits" value="539 hits in 1161 CRISPR screens"/>
</dbReference>
<dbReference type="CD-CODE" id="8C2F96ED">
    <property type="entry name" value="Centrosome"/>
</dbReference>
<dbReference type="ChiTaRS" id="RINT1">
    <property type="organism name" value="human"/>
</dbReference>
<dbReference type="GeneWiki" id="RINT1"/>
<dbReference type="GenomeRNAi" id="60561"/>
<dbReference type="Pharos" id="Q6NUQ1">
    <property type="development level" value="Tbio"/>
</dbReference>
<dbReference type="PRO" id="PR:Q6NUQ1"/>
<dbReference type="Proteomes" id="UP000005640">
    <property type="component" value="Chromosome 7"/>
</dbReference>
<dbReference type="RNAct" id="Q6NUQ1">
    <property type="molecule type" value="protein"/>
</dbReference>
<dbReference type="Bgee" id="ENSG00000135249">
    <property type="expression patterns" value="Expressed in tibia and 171 other cell types or tissues"/>
</dbReference>
<dbReference type="ExpressionAtlas" id="Q6NUQ1">
    <property type="expression patterns" value="baseline and differential"/>
</dbReference>
<dbReference type="GO" id="GO:0005829">
    <property type="term" value="C:cytosol"/>
    <property type="evidence" value="ECO:0000304"/>
    <property type="project" value="Reactome"/>
</dbReference>
<dbReference type="GO" id="GO:0070939">
    <property type="term" value="C:Dsl1/NZR complex"/>
    <property type="evidence" value="ECO:0000314"/>
    <property type="project" value="UniProtKB"/>
</dbReference>
<dbReference type="GO" id="GO:0005783">
    <property type="term" value="C:endoplasmic reticulum"/>
    <property type="evidence" value="ECO:0000314"/>
    <property type="project" value="HGNC-UCL"/>
</dbReference>
<dbReference type="GO" id="GO:0005789">
    <property type="term" value="C:endoplasmic reticulum membrane"/>
    <property type="evidence" value="ECO:0007669"/>
    <property type="project" value="UniProtKB-SubCell"/>
</dbReference>
<dbReference type="GO" id="GO:0006888">
    <property type="term" value="P:endoplasmic reticulum to Golgi vesicle-mediated transport"/>
    <property type="evidence" value="ECO:0007669"/>
    <property type="project" value="InterPro"/>
</dbReference>
<dbReference type="GO" id="GO:0007095">
    <property type="term" value="P:mitotic G2 DNA damage checkpoint signaling"/>
    <property type="evidence" value="ECO:0000315"/>
    <property type="project" value="BHF-UCL"/>
</dbReference>
<dbReference type="GO" id="GO:0015031">
    <property type="term" value="P:protein transport"/>
    <property type="evidence" value="ECO:0007669"/>
    <property type="project" value="UniProtKB-KW"/>
</dbReference>
<dbReference type="GO" id="GO:0060628">
    <property type="term" value="P:regulation of ER to Golgi vesicle-mediated transport"/>
    <property type="evidence" value="ECO:0000315"/>
    <property type="project" value="UniProtKB"/>
</dbReference>
<dbReference type="GO" id="GO:0006890">
    <property type="term" value="P:retrograde vesicle-mediated transport, Golgi to endoplasmic reticulum"/>
    <property type="evidence" value="ECO:0000318"/>
    <property type="project" value="GO_Central"/>
</dbReference>
<dbReference type="FunFam" id="1.20.58.670:FF:000003">
    <property type="entry name" value="RAD50-interacting protein 1"/>
    <property type="match status" value="1"/>
</dbReference>
<dbReference type="Gene3D" id="1.20.58.670">
    <property type="entry name" value="Dsl1p vesicle tethering complex, Tip20p subunit, domain D"/>
    <property type="match status" value="1"/>
</dbReference>
<dbReference type="InterPro" id="IPR042044">
    <property type="entry name" value="EXOC6PINT-1/Sec15/Tip20_C_dom2"/>
</dbReference>
<dbReference type="InterPro" id="IPR007528">
    <property type="entry name" value="RINT1_Tip20"/>
</dbReference>
<dbReference type="PANTHER" id="PTHR13520:SF0">
    <property type="entry name" value="RAD50-INTERACTING PROTEIN 1"/>
    <property type="match status" value="1"/>
</dbReference>
<dbReference type="PANTHER" id="PTHR13520">
    <property type="entry name" value="RAD50-INTERACTING PROTEIN 1 RINT-1"/>
    <property type="match status" value="1"/>
</dbReference>
<dbReference type="Pfam" id="PF04437">
    <property type="entry name" value="RINT1_TIP1"/>
    <property type="match status" value="1"/>
</dbReference>
<dbReference type="PROSITE" id="PS51386">
    <property type="entry name" value="RINT1_TIP20"/>
    <property type="match status" value="1"/>
</dbReference>